<proteinExistence type="evidence at transcript level"/>
<comment type="function">
    <text>Undergoes light-induced phosphorylation, probably plays an important role in the photoreceptor transduction.</text>
</comment>
<comment type="tissue specificity">
    <text>Inner and outer segments, and the inner plexiform regions of the retina.</text>
</comment>
<comment type="similarity">
    <text evidence="1">Belongs to the arrestin family.</text>
</comment>
<keyword id="KW-0597">Phosphoprotein</keyword>
<keyword id="KW-0716">Sensory transduction</keyword>
<keyword id="KW-0844">Vision</keyword>
<feature type="chain" id="PRO_0000205218" description="Phosrestin-1">
    <location>
        <begin position="1"/>
        <end position="401"/>
    </location>
</feature>
<reference key="1">
    <citation type="journal article" date="1990" name="Nucleic Acids Res.">
        <title>Nucleotide sequence of the arrestin-like 49 Kd protein gene of Drosophila miranda.</title>
        <authorList>
            <person name="Krishnan R."/>
            <person name="Ganguly R."/>
        </authorList>
    </citation>
    <scope>NUCLEOTIDE SEQUENCE [GENOMIC DNA]</scope>
    <source>
        <strain>S204</strain>
    </source>
</reference>
<sequence length="401" mass="45014">MVVSVKVFKKATPNGKVTFYLGRRDFIDHLDYCDPVDGVIVVEPEYLKNRKVFGQLATTYRYGREEDEVMGVKFSKELILSRDEIVPMTNPNMEMTPMQEKLVRKLGSNAHPFTFHFPPNSPSSVTLQQEGDDNGKPLGVEYTIRAFVGDSEDDRQHKRSMVSLVIKKLQYAPLNRGQRLPSSLVSKGFTFSNGKISLEVTLDREIYYHGEKTAATVQVSNNSKKSVKSIKCFIVQHTEITMVNAQFSKHVAQLETKEGCPITPGANLTKTFYLIPLAANNKDRHGIALDGHLKDEDVNLASSTMVQEGKNTGDACGIVISYSVRIKLNCGTLGGEMQTDVPFKLLQPAPGTIEKKRSNAMKKMKSIEQHRNVKGYYQDDDDNIVFEDFAKMRMNNVNMAD</sequence>
<gene>
    <name type="primary">Arr2</name>
    <name type="synonym">ArrB</name>
</gene>
<evidence type="ECO:0000305" key="1"/>
<dbReference type="EMBL" id="X54084">
    <property type="protein sequence ID" value="CAA38019.1"/>
    <property type="molecule type" value="Genomic_DNA"/>
</dbReference>
<dbReference type="PIR" id="S11566">
    <property type="entry name" value="S11566"/>
</dbReference>
<dbReference type="SMR" id="P19108"/>
<dbReference type="FlyBase" id="FBgn0012552">
    <property type="gene designation" value="Dmir\Arr2"/>
</dbReference>
<dbReference type="GO" id="GO:0005737">
    <property type="term" value="C:cytoplasm"/>
    <property type="evidence" value="ECO:0007669"/>
    <property type="project" value="TreeGrafter"/>
</dbReference>
<dbReference type="GO" id="GO:0001664">
    <property type="term" value="F:G protein-coupled receptor binding"/>
    <property type="evidence" value="ECO:0007669"/>
    <property type="project" value="TreeGrafter"/>
</dbReference>
<dbReference type="GO" id="GO:0002031">
    <property type="term" value="P:G protein-coupled receptor internalization"/>
    <property type="evidence" value="ECO:0007669"/>
    <property type="project" value="TreeGrafter"/>
</dbReference>
<dbReference type="GO" id="GO:0007165">
    <property type="term" value="P:signal transduction"/>
    <property type="evidence" value="ECO:0007669"/>
    <property type="project" value="InterPro"/>
</dbReference>
<dbReference type="GO" id="GO:0007601">
    <property type="term" value="P:visual perception"/>
    <property type="evidence" value="ECO:0007669"/>
    <property type="project" value="UniProtKB-KW"/>
</dbReference>
<dbReference type="FunFam" id="2.60.40.840:FF:000002">
    <property type="entry name" value="Arrestin 3"/>
    <property type="match status" value="1"/>
</dbReference>
<dbReference type="FunFam" id="2.60.40.640:FF:000020">
    <property type="entry name" value="Arrestin, Arr2"/>
    <property type="match status" value="1"/>
</dbReference>
<dbReference type="Gene3D" id="2.60.40.640">
    <property type="match status" value="1"/>
</dbReference>
<dbReference type="Gene3D" id="2.60.40.840">
    <property type="match status" value="1"/>
</dbReference>
<dbReference type="InterPro" id="IPR000698">
    <property type="entry name" value="Arrestin"/>
</dbReference>
<dbReference type="InterPro" id="IPR014752">
    <property type="entry name" value="Arrestin-like_C"/>
</dbReference>
<dbReference type="InterPro" id="IPR011021">
    <property type="entry name" value="Arrestin-like_N"/>
</dbReference>
<dbReference type="InterPro" id="IPR011022">
    <property type="entry name" value="Arrestin_C-like"/>
</dbReference>
<dbReference type="InterPro" id="IPR017864">
    <property type="entry name" value="Arrestin_CS"/>
</dbReference>
<dbReference type="InterPro" id="IPR014753">
    <property type="entry name" value="Arrestin_N"/>
</dbReference>
<dbReference type="InterPro" id="IPR014756">
    <property type="entry name" value="Ig_E-set"/>
</dbReference>
<dbReference type="PANTHER" id="PTHR11792">
    <property type="entry name" value="ARRESTIN"/>
    <property type="match status" value="1"/>
</dbReference>
<dbReference type="PANTHER" id="PTHR11792:SF23">
    <property type="entry name" value="PHOSRESTIN-1"/>
    <property type="match status" value="1"/>
</dbReference>
<dbReference type="Pfam" id="PF02752">
    <property type="entry name" value="Arrestin_C"/>
    <property type="match status" value="1"/>
</dbReference>
<dbReference type="Pfam" id="PF00339">
    <property type="entry name" value="Arrestin_N"/>
    <property type="match status" value="1"/>
</dbReference>
<dbReference type="PRINTS" id="PR00309">
    <property type="entry name" value="ARRESTIN"/>
</dbReference>
<dbReference type="SMART" id="SM01017">
    <property type="entry name" value="Arrestin_C"/>
    <property type="match status" value="1"/>
</dbReference>
<dbReference type="SUPFAM" id="SSF81296">
    <property type="entry name" value="E set domains"/>
    <property type="match status" value="2"/>
</dbReference>
<dbReference type="PROSITE" id="PS00295">
    <property type="entry name" value="ARRESTINS"/>
    <property type="match status" value="1"/>
</dbReference>
<name>ARRB_DROMI</name>
<accession>P19108</accession>
<protein>
    <recommendedName>
        <fullName>Phosrestin-1</fullName>
    </recommendedName>
    <alternativeName>
        <fullName>49 kDa arrestin-like protein</fullName>
    </alternativeName>
    <alternativeName>
        <fullName>Arrestin-2</fullName>
    </alternativeName>
    <alternativeName>
        <fullName>Arrestin-B</fullName>
    </alternativeName>
    <alternativeName>
        <fullName>Phosrestin I</fullName>
    </alternativeName>
</protein>
<organism>
    <name type="scientific">Drosophila miranda</name>
    <name type="common">Fruit fly</name>
    <dbReference type="NCBI Taxonomy" id="7229"/>
    <lineage>
        <taxon>Eukaryota</taxon>
        <taxon>Metazoa</taxon>
        <taxon>Ecdysozoa</taxon>
        <taxon>Arthropoda</taxon>
        <taxon>Hexapoda</taxon>
        <taxon>Insecta</taxon>
        <taxon>Pterygota</taxon>
        <taxon>Neoptera</taxon>
        <taxon>Endopterygota</taxon>
        <taxon>Diptera</taxon>
        <taxon>Brachycera</taxon>
        <taxon>Muscomorpha</taxon>
        <taxon>Ephydroidea</taxon>
        <taxon>Drosophilidae</taxon>
        <taxon>Drosophila</taxon>
        <taxon>Sophophora</taxon>
    </lineage>
</organism>